<reference key="1">
    <citation type="journal article" date="2002" name="Plant Sci.">
        <title>Cloning and characterization of grapevine (Vitis vinifera L.) MADS-box genes expressed during inflorescence and berry development.</title>
        <authorList>
            <person name="Boss P.K."/>
            <person name="Sensi E."/>
            <person name="Hua C."/>
            <person name="Davies C."/>
            <person name="Thomas M.R."/>
        </authorList>
    </citation>
    <scope>NUCLEOTIDE SEQUENCE [MRNA]</scope>
    <scope>TISSUE SPECIFICITY</scope>
    <source>
        <strain>cv. Cabernet Sauvignon</strain>
    </source>
</reference>
<reference key="2">
    <citation type="journal article" date="2017" name="J. Exp. Bot.">
        <title>The MADS-box gene Agamous-like 11 is essential for seed morphogenesis in grapevine.</title>
        <authorList>
            <person name="Malabarba J."/>
            <person name="Buffon V."/>
            <person name="Mariath J.E.A."/>
            <person name="Gaeta M.L."/>
            <person name="Dornelas M.C."/>
            <person name="Margis-Pinheiro M."/>
            <person name="Pasquali G."/>
            <person name="Revers L.F."/>
        </authorList>
    </citation>
    <scope>NUCLEOTIDE SEQUENCE [GENOMIC DNA]</scope>
    <scope>FUNCTION</scope>
    <scope>TISSUE SPECIFICITY</scope>
    <source>
        <strain>cv. Chardonnay</strain>
        <strain>cv. Sultanina</strain>
    </source>
</reference>
<reference key="3">
    <citation type="submission" date="2017-11" db="EMBL/GenBank/DDBJ databases">
        <title>Clone and function analysis of grape LEC1 responsive to GA in modulation of embryo development process.</title>
        <authorList>
            <person name="Cui M."/>
            <person name="Guo F."/>
            <person name="Wang C."/>
        </authorList>
    </citation>
    <scope>NUCLEOTIDE SEQUENCE [MRNA]</scope>
</reference>
<reference key="4">
    <citation type="journal article" date="2007" name="Nature">
        <title>The grapevine genome sequence suggests ancestral hexaploidization in major angiosperm phyla.</title>
        <authorList>
            <person name="Jaillon O."/>
            <person name="Aury J.-M."/>
            <person name="Noel B."/>
            <person name="Policriti A."/>
            <person name="Clepet C."/>
            <person name="Casagrande A."/>
            <person name="Choisne N."/>
            <person name="Aubourg S."/>
            <person name="Vitulo N."/>
            <person name="Jubin C."/>
            <person name="Vezzi A."/>
            <person name="Legeai F."/>
            <person name="Hugueney P."/>
            <person name="Dasilva C."/>
            <person name="Horner D."/>
            <person name="Mica E."/>
            <person name="Jublot D."/>
            <person name="Poulain J."/>
            <person name="Bruyere C."/>
            <person name="Billault A."/>
            <person name="Segurens B."/>
            <person name="Gouyvenoux M."/>
            <person name="Ugarte E."/>
            <person name="Cattonaro F."/>
            <person name="Anthouard V."/>
            <person name="Vico V."/>
            <person name="Del Fabbro C."/>
            <person name="Alaux M."/>
            <person name="Di Gaspero G."/>
            <person name="Dumas V."/>
            <person name="Felice N."/>
            <person name="Paillard S."/>
            <person name="Juman I."/>
            <person name="Moroldo M."/>
            <person name="Scalabrin S."/>
            <person name="Canaguier A."/>
            <person name="Le Clainche I."/>
            <person name="Malacrida G."/>
            <person name="Durand E."/>
            <person name="Pesole G."/>
            <person name="Laucou V."/>
            <person name="Chatelet P."/>
            <person name="Merdinoglu D."/>
            <person name="Delledonne M."/>
            <person name="Pezzotti M."/>
            <person name="Lecharny A."/>
            <person name="Scarpelli C."/>
            <person name="Artiguenave F."/>
            <person name="Pe M.E."/>
            <person name="Valle G."/>
            <person name="Morgante M."/>
            <person name="Caboche M."/>
            <person name="Adam-Blondon A.-F."/>
            <person name="Weissenbach J."/>
            <person name="Quetier F."/>
            <person name="Wincker P."/>
        </authorList>
    </citation>
    <scope>NUCLEOTIDE SEQUENCE [LARGE SCALE GENOMIC DNA]</scope>
    <source>
        <strain>cv. Pinot noir / PN40024</strain>
    </source>
</reference>
<reference key="5">
    <citation type="journal article" date="2009" name="Plant Physiol.">
        <title>Genome-wide analysis of MIKCC-type MADS box genes in grapevine.</title>
        <authorList>
            <person name="Diaz-Riquelme J."/>
            <person name="Lijavetzky D."/>
            <person name="Martinez-Zapater J.M."/>
            <person name="Carmona M.J."/>
        </authorList>
    </citation>
    <scope>GENE FAMILY</scope>
</reference>
<reference key="6">
    <citation type="journal article" date="2011" name="BMC Plant Biol.">
        <title>Molecular, genetic and transcriptional evidence for a role of VvAGL11 in stenospermocarpic seedlessness in grapevine.</title>
        <authorList>
            <person name="Mejia N."/>
            <person name="Soto B."/>
            <person name="Guerrero M."/>
            <person name="Casanueva X."/>
            <person name="Houel C."/>
            <person name="Miccono M.L."/>
            <person name="Ramos R."/>
            <person name="Le Cunff L."/>
            <person name="Boursiquot J.M."/>
            <person name="Hinrichsen P."/>
            <person name="Adam-Blondon A.F."/>
        </authorList>
    </citation>
    <scope>FUNCTION</scope>
</reference>
<reference key="7">
    <citation type="journal article" date="2016" name="BMC Genomics">
        <title>Structural and functional annotation of the MADS-box transcription factor family in grapevine.</title>
        <authorList>
            <person name="Grimplet J."/>
            <person name="Martinez-Zapater J.M."/>
            <person name="Carmona M.J."/>
        </authorList>
    </citation>
    <scope>GENE FAMILY</scope>
</reference>
<reference key="8">
    <citation type="journal article" date="2018" name="Plant Physiol.">
        <title>The major origin of seedless grapes is associated with a missense mutation in the MADS-box gene VviAGL11.</title>
        <authorList>
            <person name="Royo C."/>
            <person name="Torres-Perez R."/>
            <person name="Mauri N."/>
            <person name="Diestro N."/>
            <person name="Cabezas J.A."/>
            <person name="Marchal C."/>
            <person name="Lacombe T."/>
            <person name="Ibanez J."/>
            <person name="Tornel M."/>
            <person name="Carreno J."/>
            <person name="Martinez-Zapater J.M."/>
            <person name="Carbonell-Bejerano P."/>
        </authorList>
    </citation>
    <scope>FUNCTION</scope>
    <scope>POLYMORPHISM</scope>
</reference>
<name>AG11C_VITVI</name>
<proteinExistence type="evidence at transcript level"/>
<dbReference type="EMBL" id="AF373604">
    <property type="protein sequence ID" value="AAM21345.1"/>
    <property type="molecule type" value="mRNA"/>
</dbReference>
<dbReference type="EMBL" id="KM401845">
    <property type="protein sequence ID" value="AKJ79177.1"/>
    <property type="molecule type" value="Genomic_DNA"/>
</dbReference>
<dbReference type="EMBL" id="KM401846">
    <property type="protein sequence ID" value="AKJ79178.1"/>
    <property type="molecule type" value="Genomic_DNA"/>
</dbReference>
<dbReference type="EMBL" id="KM401847">
    <property type="protein sequence ID" value="AKJ79179.1"/>
    <property type="molecule type" value="Genomic_DNA"/>
</dbReference>
<dbReference type="EMBL" id="MG581423">
    <property type="protein sequence ID" value="AUJ18467.1"/>
    <property type="status" value="ALT_INIT"/>
    <property type="molecule type" value="mRNA"/>
</dbReference>
<dbReference type="EMBL" id="FN596744">
    <property type="protein sequence ID" value="CCB61637.1"/>
    <property type="molecule type" value="Genomic_DNA"/>
</dbReference>
<dbReference type="RefSeq" id="NP_001268118.1">
    <property type="nucleotide sequence ID" value="NM_001281189.1"/>
</dbReference>
<dbReference type="RefSeq" id="XP_010665296.1">
    <property type="nucleotide sequence ID" value="XM_010666994.2"/>
</dbReference>
<dbReference type="RefSeq" id="XP_010665297.1">
    <property type="nucleotide sequence ID" value="XM_010666995.2"/>
</dbReference>
<dbReference type="SMR" id="F6I457"/>
<dbReference type="FunCoup" id="F6I457">
    <property type="interactions" value="17"/>
</dbReference>
<dbReference type="STRING" id="29760.F6I457"/>
<dbReference type="PaxDb" id="29760-VIT_18s0041g01880.t01"/>
<dbReference type="EnsemblPlants" id="Vitvi18g02133_t001">
    <property type="protein sequence ID" value="Vitvi18g02133_P001"/>
    <property type="gene ID" value="Vitvi18g02133"/>
</dbReference>
<dbReference type="GeneID" id="100232870"/>
<dbReference type="Gramene" id="Vitvi18g02133_t001">
    <property type="protein sequence ID" value="Vitvi18g02133_P001"/>
    <property type="gene ID" value="Vitvi18g02133"/>
</dbReference>
<dbReference type="KEGG" id="vvi:100232870"/>
<dbReference type="eggNOG" id="KOG0014">
    <property type="taxonomic scope" value="Eukaryota"/>
</dbReference>
<dbReference type="HOGENOM" id="CLU_053053_0_0_1"/>
<dbReference type="InParanoid" id="F6I457"/>
<dbReference type="OrthoDB" id="1898716at2759"/>
<dbReference type="Proteomes" id="UP000009183">
    <property type="component" value="Chromosome 18"/>
</dbReference>
<dbReference type="ExpressionAtlas" id="F6I457">
    <property type="expression patterns" value="baseline and differential"/>
</dbReference>
<dbReference type="GO" id="GO:0005634">
    <property type="term" value="C:nucleus"/>
    <property type="evidence" value="ECO:0007669"/>
    <property type="project" value="UniProtKB-SubCell"/>
</dbReference>
<dbReference type="GO" id="GO:0000981">
    <property type="term" value="F:DNA-binding transcription factor activity, RNA polymerase II-specific"/>
    <property type="evidence" value="ECO:0000318"/>
    <property type="project" value="GO_Central"/>
</dbReference>
<dbReference type="GO" id="GO:0046983">
    <property type="term" value="F:protein dimerization activity"/>
    <property type="evidence" value="ECO:0007669"/>
    <property type="project" value="InterPro"/>
</dbReference>
<dbReference type="GO" id="GO:0000978">
    <property type="term" value="F:RNA polymerase II cis-regulatory region sequence-specific DNA binding"/>
    <property type="evidence" value="ECO:0000318"/>
    <property type="project" value="GO_Central"/>
</dbReference>
<dbReference type="GO" id="GO:0045944">
    <property type="term" value="P:positive regulation of transcription by RNA polymerase II"/>
    <property type="evidence" value="ECO:0007669"/>
    <property type="project" value="InterPro"/>
</dbReference>
<dbReference type="GO" id="GO:0006357">
    <property type="term" value="P:regulation of transcription by RNA polymerase II"/>
    <property type="evidence" value="ECO:0000318"/>
    <property type="project" value="GO_Central"/>
</dbReference>
<dbReference type="GO" id="GO:0048316">
    <property type="term" value="P:seed development"/>
    <property type="evidence" value="ECO:0000315"/>
    <property type="project" value="UniProtKB"/>
</dbReference>
<dbReference type="CDD" id="cd00265">
    <property type="entry name" value="MADS_MEF2_like"/>
    <property type="match status" value="1"/>
</dbReference>
<dbReference type="FunFam" id="3.40.1810.10:FF:000009">
    <property type="entry name" value="agamous-like MADS-box protein AGL11"/>
    <property type="match status" value="1"/>
</dbReference>
<dbReference type="Gene3D" id="3.40.1810.10">
    <property type="entry name" value="Transcription factor, MADS-box"/>
    <property type="match status" value="1"/>
</dbReference>
<dbReference type="InterPro" id="IPR050142">
    <property type="entry name" value="MADS-box/MEF2_TF"/>
</dbReference>
<dbReference type="InterPro" id="IPR033896">
    <property type="entry name" value="MEF2-like_N"/>
</dbReference>
<dbReference type="InterPro" id="IPR002487">
    <property type="entry name" value="TF_Kbox"/>
</dbReference>
<dbReference type="InterPro" id="IPR002100">
    <property type="entry name" value="TF_MADSbox"/>
</dbReference>
<dbReference type="InterPro" id="IPR036879">
    <property type="entry name" value="TF_MADSbox_sf"/>
</dbReference>
<dbReference type="PANTHER" id="PTHR48019">
    <property type="entry name" value="SERUM RESPONSE FACTOR HOMOLOG"/>
    <property type="match status" value="1"/>
</dbReference>
<dbReference type="Pfam" id="PF01486">
    <property type="entry name" value="K-box"/>
    <property type="match status" value="1"/>
</dbReference>
<dbReference type="Pfam" id="PF00319">
    <property type="entry name" value="SRF-TF"/>
    <property type="match status" value="1"/>
</dbReference>
<dbReference type="PRINTS" id="PR00404">
    <property type="entry name" value="MADSDOMAIN"/>
</dbReference>
<dbReference type="SMART" id="SM00432">
    <property type="entry name" value="MADS"/>
    <property type="match status" value="1"/>
</dbReference>
<dbReference type="SUPFAM" id="SSF55455">
    <property type="entry name" value="SRF-like"/>
    <property type="match status" value="1"/>
</dbReference>
<dbReference type="PROSITE" id="PS51297">
    <property type="entry name" value="K_BOX"/>
    <property type="match status" value="1"/>
</dbReference>
<dbReference type="PROSITE" id="PS00350">
    <property type="entry name" value="MADS_BOX_1"/>
    <property type="match status" value="1"/>
</dbReference>
<dbReference type="PROSITE" id="PS50066">
    <property type="entry name" value="MADS_BOX_2"/>
    <property type="match status" value="1"/>
</dbReference>
<sequence length="223" mass="25673">MGRGKIEIKRIENTTNRQVTFCKRRNGLLKKAYELSVLCDAEVALIVFSSRGRVYEYSNNNIKSTIDRYKKASSDSTNGGSTMEINAQYYQQESAKLRQQIQMLQNSNRHLMGDSLASLTVKELKQLENRLERGITRIRSKKHELLLAEIEYLQKREIELENESVYLRTKIAEVERLQQANMVSTHEFNAIQALVSRNFFQPNMIEGGSTGYPLPDKKVLHLG</sequence>
<keyword id="KW-0217">Developmental protein</keyword>
<keyword id="KW-0238">DNA-binding</keyword>
<keyword id="KW-0539">Nucleus</keyword>
<keyword id="KW-1185">Reference proteome</keyword>
<keyword id="KW-0804">Transcription</keyword>
<keyword id="KW-0805">Transcription regulation</keyword>
<gene>
    <name evidence="10" type="primary">AGL11</name>
    <name evidence="11" type="synonym">MADS5</name>
    <name evidence="12" type="synonym">SDI</name>
    <name evidence="13" type="ordered locus">VIT_18s0041g01880</name>
</gene>
<protein>
    <recommendedName>
        <fullName evidence="12">Agamous-like MADS-box protein AGL11</fullName>
    </recommendedName>
    <alternativeName>
        <fullName evidence="10">Agamous like-protein 11</fullName>
        <shortName evidence="8">VvAGL11</shortName>
    </alternativeName>
    <alternativeName>
        <fullName evidence="11">MADS-box protein 5</fullName>
        <shortName evidence="11">VvMADS5</shortName>
    </alternativeName>
    <alternativeName>
        <fullName evidence="12">Protein SEED DEVELOPMENT INHIBITOR</fullName>
    </alternativeName>
    <alternativeName>
        <fullName evidence="7">VvAG3</fullName>
    </alternativeName>
    <alternativeName>
        <fullName evidence="9">VviAG3</fullName>
    </alternativeName>
</protein>
<accession>F6I457</accession>
<accession>A0A2I6BR75</accession>
<accession>Q8LLQ9</accession>
<organism>
    <name type="scientific">Vitis vinifera</name>
    <name type="common">Grape</name>
    <dbReference type="NCBI Taxonomy" id="29760"/>
    <lineage>
        <taxon>Eukaryota</taxon>
        <taxon>Viridiplantae</taxon>
        <taxon>Streptophyta</taxon>
        <taxon>Embryophyta</taxon>
        <taxon>Tracheophyta</taxon>
        <taxon>Spermatophyta</taxon>
        <taxon>Magnoliopsida</taxon>
        <taxon>eudicotyledons</taxon>
        <taxon>Gunneridae</taxon>
        <taxon>Pentapetalae</taxon>
        <taxon>rosids</taxon>
        <taxon>Vitales</taxon>
        <taxon>Vitaceae</taxon>
        <taxon>Viteae</taxon>
        <taxon>Vitis</taxon>
    </lineage>
</organism>
<evidence type="ECO:0000255" key="1">
    <source>
        <dbReference type="PROSITE-ProRule" id="PRU00251"/>
    </source>
</evidence>
<evidence type="ECO:0000255" key="2">
    <source>
        <dbReference type="PROSITE-ProRule" id="PRU00629"/>
    </source>
</evidence>
<evidence type="ECO:0000269" key="3">
    <source>
    </source>
</evidence>
<evidence type="ECO:0000269" key="4">
    <source>
    </source>
</evidence>
<evidence type="ECO:0000269" key="5">
    <source>
    </source>
</evidence>
<evidence type="ECO:0000269" key="6">
    <source ref="1"/>
</evidence>
<evidence type="ECO:0000303" key="7">
    <source>
    </source>
</evidence>
<evidence type="ECO:0000303" key="8">
    <source>
    </source>
</evidence>
<evidence type="ECO:0000303" key="9">
    <source>
    </source>
</evidence>
<evidence type="ECO:0000303" key="10">
    <source>
    </source>
</evidence>
<evidence type="ECO:0000303" key="11">
    <source ref="1"/>
</evidence>
<evidence type="ECO:0000305" key="12"/>
<evidence type="ECO:0000312" key="13">
    <source>
        <dbReference type="EMBL" id="CCB61637.1"/>
    </source>
</evidence>
<feature type="chain" id="PRO_0000447284" description="Agamous-like MADS-box protein AGL11">
    <location>
        <begin position="1"/>
        <end position="223"/>
    </location>
</feature>
<feature type="domain" description="MADS-box" evidence="1">
    <location>
        <begin position="1"/>
        <end position="61"/>
    </location>
</feature>
<feature type="domain" description="K-box" evidence="2">
    <location>
        <begin position="87"/>
        <end position="177"/>
    </location>
</feature>
<feature type="sequence conflict" description="In Ref. 1; AAM21345." evidence="12" ref="1">
    <original>S</original>
    <variation>F</variation>
    <location>
        <position position="81"/>
    </location>
</feature>
<feature type="sequence conflict" description="In Ref. 1; AAM21345." evidence="12" ref="1">
    <original>P</original>
    <variation>H</variation>
    <location>
        <position position="215"/>
    </location>
</feature>
<comment type="function">
    <text evidence="3 5 6">Probable transcription factor involved in seed development (PubMed:21447172, PubMed:29853599, Ref.1). Plays a role in seed morphogenesis by promoting the correct development of endotesta cell layer, which directs the further development of the seed coat, the endosperm, and consequently the embryo (PubMed:29853599, Ref.1).</text>
</comment>
<comment type="subcellular location">
    <subcellularLocation>
        <location evidence="1">Nucleus</location>
    </subcellularLocation>
</comment>
<comment type="tissue specificity">
    <text evidence="4 6">Expressed in flowers and seeds (Ref.1). Expressed in endotesta cell layer of developing seeds (PubMed:28369525).</text>
</comment>
<comment type="polymorphism">
    <text evidence="5">A single amino acid substitution of Arg-197 in cultivar Sultanina (AC F6I457) to Leu-197 in a Sultanina mutant cultivar (AC A0A217EJJ0) is responsible for the production of seedless grape.</text>
</comment>
<comment type="sequence caution" evidence="12">
    <conflict type="erroneous initiation">
        <sequence resource="EMBL-CDS" id="AUJ18467"/>
    </conflict>
    <text>Extended N-terminus.</text>
</comment>